<proteinExistence type="inferred from homology"/>
<sequence>MKLLPMDIPRVVIAGTSSKVGKTMISIGLMRLLVNRGYEVQPYKVGPDFIDPGFHHLATGRYSRNLDSFMLSRSAILETFIRNFRGADVAIIEGKTGLYDSSDAVSEKGSVAEVSKILKAPVVLVANVERLNRTAAAIILGYKLFDPDVLLKGVILNRVGSERHAGKVRTAVEKLAGVRVLGVVPRKKVKMPYRHLGLVTAYEREDMDELLDNIAEIVEKHVDVDKILEIAEKAPPLDSVFEDEKEDEEKKYVKIGVIRDQVFSFYYQDNLDELSKYAELVFVNSLTDKRLPDVDALYIGGGFPEVFAEGLEKNEKLRNEIYDFCQSGNPVYAECGGLMYLGESLETSEGEFEMVGFLPLKTKMYERFQAQGYSVYRTLKPCIIAKRNQKIVGHEFHYSRPTLTGKADFAFRVERGFGIDGRRDGILKENTLGCYIHVHFLSDKSIARRFVKKAMKKK</sequence>
<reference key="1">
    <citation type="journal article" date="1997" name="Nature">
        <title>The complete genome sequence of the hyperthermophilic, sulphate-reducing archaeon Archaeoglobus fulgidus.</title>
        <authorList>
            <person name="Klenk H.-P."/>
            <person name="Clayton R.A."/>
            <person name="Tomb J.-F."/>
            <person name="White O."/>
            <person name="Nelson K.E."/>
            <person name="Ketchum K.A."/>
            <person name="Dodson R.J."/>
            <person name="Gwinn M.L."/>
            <person name="Hickey E.K."/>
            <person name="Peterson J.D."/>
            <person name="Richardson D.L."/>
            <person name="Kerlavage A.R."/>
            <person name="Graham D.E."/>
            <person name="Kyrpides N.C."/>
            <person name="Fleischmann R.D."/>
            <person name="Quackenbush J."/>
            <person name="Lee N.H."/>
            <person name="Sutton G.G."/>
            <person name="Gill S.R."/>
            <person name="Kirkness E.F."/>
            <person name="Dougherty B.A."/>
            <person name="McKenney K."/>
            <person name="Adams M.D."/>
            <person name="Loftus B.J."/>
            <person name="Peterson S.N."/>
            <person name="Reich C.I."/>
            <person name="McNeil L.K."/>
            <person name="Badger J.H."/>
            <person name="Glodek A."/>
            <person name="Zhou L."/>
            <person name="Overbeek R."/>
            <person name="Gocayne J.D."/>
            <person name="Weidman J.F."/>
            <person name="McDonald L.A."/>
            <person name="Utterback T.R."/>
            <person name="Cotton M.D."/>
            <person name="Spriggs T."/>
            <person name="Artiach P."/>
            <person name="Kaine B.P."/>
            <person name="Sykes S.M."/>
            <person name="Sadow P.W."/>
            <person name="D'Andrea K.P."/>
            <person name="Bowman C."/>
            <person name="Fujii C."/>
            <person name="Garland S.A."/>
            <person name="Mason T.M."/>
            <person name="Olsen G.J."/>
            <person name="Fraser C.M."/>
            <person name="Smith H.O."/>
            <person name="Woese C.R."/>
            <person name="Venter J.C."/>
        </authorList>
    </citation>
    <scope>NUCLEOTIDE SEQUENCE [LARGE SCALE GENOMIC DNA]</scope>
    <source>
        <strain>ATCC 49558 / DSM 4304 / JCM 9628 / NBRC 100126 / VC-16</strain>
    </source>
</reference>
<name>CBIA_ARCFU</name>
<gene>
    <name evidence="1" type="primary">cbiA</name>
    <name type="ordered locus">AF_2229</name>
</gene>
<dbReference type="EC" id="6.3.5.11" evidence="1"/>
<dbReference type="EMBL" id="AE000782">
    <property type="protein sequence ID" value="AAB89025.1"/>
    <property type="molecule type" value="Genomic_DNA"/>
</dbReference>
<dbReference type="PIR" id="E69528">
    <property type="entry name" value="E69528"/>
</dbReference>
<dbReference type="SMR" id="O28054"/>
<dbReference type="STRING" id="224325.AF_2229"/>
<dbReference type="PaxDb" id="224325-AF_2229"/>
<dbReference type="EnsemblBacteria" id="AAB89025">
    <property type="protein sequence ID" value="AAB89025"/>
    <property type="gene ID" value="AF_2229"/>
</dbReference>
<dbReference type="KEGG" id="afu:AF_2229"/>
<dbReference type="eggNOG" id="arCOG00106">
    <property type="taxonomic scope" value="Archaea"/>
</dbReference>
<dbReference type="HOGENOM" id="CLU_022752_2_0_2"/>
<dbReference type="OrthoDB" id="8896at2157"/>
<dbReference type="PhylomeDB" id="O28054"/>
<dbReference type="UniPathway" id="UPA00148">
    <property type="reaction ID" value="UER00231"/>
</dbReference>
<dbReference type="Proteomes" id="UP000002199">
    <property type="component" value="Chromosome"/>
</dbReference>
<dbReference type="GO" id="GO:0005524">
    <property type="term" value="F:ATP binding"/>
    <property type="evidence" value="ECO:0007669"/>
    <property type="project" value="UniProtKB-UniRule"/>
</dbReference>
<dbReference type="GO" id="GO:0042242">
    <property type="term" value="F:cobyrinic acid a,c-diamide synthase activity"/>
    <property type="evidence" value="ECO:0007669"/>
    <property type="project" value="UniProtKB-UniRule"/>
</dbReference>
<dbReference type="GO" id="GO:0009236">
    <property type="term" value="P:cobalamin biosynthetic process"/>
    <property type="evidence" value="ECO:0007669"/>
    <property type="project" value="UniProtKB-UniRule"/>
</dbReference>
<dbReference type="CDD" id="cd05388">
    <property type="entry name" value="CobB_N"/>
    <property type="match status" value="1"/>
</dbReference>
<dbReference type="CDD" id="cd03130">
    <property type="entry name" value="GATase1_CobB"/>
    <property type="match status" value="1"/>
</dbReference>
<dbReference type="Gene3D" id="3.40.50.880">
    <property type="match status" value="1"/>
</dbReference>
<dbReference type="Gene3D" id="3.40.50.300">
    <property type="entry name" value="P-loop containing nucleotide triphosphate hydrolases"/>
    <property type="match status" value="2"/>
</dbReference>
<dbReference type="HAMAP" id="MF_00027">
    <property type="entry name" value="CobB_CbiA"/>
    <property type="match status" value="1"/>
</dbReference>
<dbReference type="InterPro" id="IPR004484">
    <property type="entry name" value="CbiA/CobB_synth"/>
</dbReference>
<dbReference type="InterPro" id="IPR029062">
    <property type="entry name" value="Class_I_gatase-like"/>
</dbReference>
<dbReference type="InterPro" id="IPR002586">
    <property type="entry name" value="CobQ/CobB/MinD/ParA_Nub-bd_dom"/>
</dbReference>
<dbReference type="InterPro" id="IPR011698">
    <property type="entry name" value="GATase_3"/>
</dbReference>
<dbReference type="InterPro" id="IPR027417">
    <property type="entry name" value="P-loop_NTPase"/>
</dbReference>
<dbReference type="NCBIfam" id="TIGR00379">
    <property type="entry name" value="cobB"/>
    <property type="match status" value="1"/>
</dbReference>
<dbReference type="NCBIfam" id="NF002204">
    <property type="entry name" value="PRK01077.1"/>
    <property type="match status" value="1"/>
</dbReference>
<dbReference type="PANTHER" id="PTHR43873">
    <property type="entry name" value="COBYRINATE A,C-DIAMIDE SYNTHASE"/>
    <property type="match status" value="1"/>
</dbReference>
<dbReference type="PANTHER" id="PTHR43873:SF1">
    <property type="entry name" value="COBYRINATE A,C-DIAMIDE SYNTHASE"/>
    <property type="match status" value="1"/>
</dbReference>
<dbReference type="Pfam" id="PF01656">
    <property type="entry name" value="CbiA"/>
    <property type="match status" value="1"/>
</dbReference>
<dbReference type="Pfam" id="PF07685">
    <property type="entry name" value="GATase_3"/>
    <property type="match status" value="1"/>
</dbReference>
<dbReference type="SUPFAM" id="SSF52317">
    <property type="entry name" value="Class I glutamine amidotransferase-like"/>
    <property type="match status" value="1"/>
</dbReference>
<dbReference type="SUPFAM" id="SSF52540">
    <property type="entry name" value="P-loop containing nucleoside triphosphate hydrolases"/>
    <property type="match status" value="1"/>
</dbReference>
<dbReference type="PROSITE" id="PS51274">
    <property type="entry name" value="GATASE_COBBQ"/>
    <property type="match status" value="1"/>
</dbReference>
<feature type="chain" id="PRO_0000141273" description="Cobyrinate a,c-diamide synthase">
    <location>
        <begin position="1"/>
        <end position="458"/>
    </location>
</feature>
<feature type="domain" description="GATase cobBQ-type" evidence="1">
    <location>
        <begin position="254"/>
        <end position="445"/>
    </location>
</feature>
<feature type="active site" description="Nucleophile" evidence="1">
    <location>
        <position position="335"/>
    </location>
</feature>
<feature type="site" description="Increases nucleophilicity of active site Cys" evidence="1">
    <location>
        <position position="437"/>
    </location>
</feature>
<accession>O28054</accession>
<protein>
    <recommendedName>
        <fullName evidence="1">Cobyrinate a,c-diamide synthase</fullName>
        <ecNumber evidence="1">6.3.5.11</ecNumber>
    </recommendedName>
    <alternativeName>
        <fullName evidence="1">Cobyrinic acid a,c-diamide synthetase</fullName>
    </alternativeName>
</protein>
<keyword id="KW-0067">ATP-binding</keyword>
<keyword id="KW-0169">Cobalamin biosynthesis</keyword>
<keyword id="KW-0315">Glutamine amidotransferase</keyword>
<keyword id="KW-0436">Ligase</keyword>
<keyword id="KW-0460">Magnesium</keyword>
<keyword id="KW-0547">Nucleotide-binding</keyword>
<keyword id="KW-1185">Reference proteome</keyword>
<evidence type="ECO:0000255" key="1">
    <source>
        <dbReference type="HAMAP-Rule" id="MF_00027"/>
    </source>
</evidence>
<comment type="function">
    <text evidence="1">Catalyzes the ATP-dependent amidation of the two carboxylate groups at positions a and c of cobyrinate, using either L-glutamine or ammonia as the nitrogen source.</text>
</comment>
<comment type="catalytic activity">
    <reaction evidence="1">
        <text>cob(II)yrinate + 2 L-glutamine + 2 ATP + 2 H2O = cob(II)yrinate a,c diamide + 2 L-glutamate + 2 ADP + 2 phosphate + 2 H(+)</text>
        <dbReference type="Rhea" id="RHEA:26289"/>
        <dbReference type="ChEBI" id="CHEBI:15377"/>
        <dbReference type="ChEBI" id="CHEBI:15378"/>
        <dbReference type="ChEBI" id="CHEBI:29985"/>
        <dbReference type="ChEBI" id="CHEBI:30616"/>
        <dbReference type="ChEBI" id="CHEBI:43474"/>
        <dbReference type="ChEBI" id="CHEBI:58359"/>
        <dbReference type="ChEBI" id="CHEBI:58537"/>
        <dbReference type="ChEBI" id="CHEBI:58894"/>
        <dbReference type="ChEBI" id="CHEBI:456216"/>
        <dbReference type="EC" id="6.3.5.11"/>
    </reaction>
</comment>
<comment type="cofactor">
    <cofactor evidence="1">
        <name>Mg(2+)</name>
        <dbReference type="ChEBI" id="CHEBI:18420"/>
    </cofactor>
</comment>
<comment type="pathway">
    <text evidence="1">Cofactor biosynthesis; adenosylcobalamin biosynthesis; cob(II)yrinate a,c-diamide from sirohydrochlorin (anaerobic route): step 10/10.</text>
</comment>
<comment type="domain">
    <text evidence="1">Comprises of two domains. The C-terminal domain contains the binding site for glutamine and catalyzes the hydrolysis of this substrate to glutamate and ammonia. The N-terminal domain is anticipated to bind ATP and cobyrinate and catalyzes the ultimate synthesis of the diamide product. The ammonia produced via the glutaminase domain is probably translocated to the adjacent domain via a molecular tunnel, where it reacts with an activated intermediate.</text>
</comment>
<comment type="miscellaneous">
    <text evidence="1">The a and c carboxylates of cobyrinate are activated for nucleophilic attack via formation of a phosphorylated intermediate by ATP. CbiA catalyzes first the amidation of the c-carboxylate, and then that of the a-carboxylate.</text>
</comment>
<comment type="similarity">
    <text evidence="1">Belongs to the CobB/CbiA family.</text>
</comment>
<organism>
    <name type="scientific">Archaeoglobus fulgidus (strain ATCC 49558 / DSM 4304 / JCM 9628 / NBRC 100126 / VC-16)</name>
    <dbReference type="NCBI Taxonomy" id="224325"/>
    <lineage>
        <taxon>Archaea</taxon>
        <taxon>Methanobacteriati</taxon>
        <taxon>Methanobacteriota</taxon>
        <taxon>Archaeoglobi</taxon>
        <taxon>Archaeoglobales</taxon>
        <taxon>Archaeoglobaceae</taxon>
        <taxon>Archaeoglobus</taxon>
    </lineage>
</organism>